<evidence type="ECO:0000250" key="1">
    <source>
        <dbReference type="UniProtKB" id="Q9Y7D0"/>
    </source>
</evidence>
<evidence type="ECO:0000255" key="2"/>
<evidence type="ECO:0000269" key="3">
    <source>
    </source>
</evidence>
<evidence type="ECO:0000303" key="4">
    <source>
    </source>
</evidence>
<evidence type="ECO:0000305" key="5"/>
<name>GRGB_PENSQ</name>
<proteinExistence type="evidence at protein level"/>
<comment type="function">
    <text evidence="3">Trans-enoyl reductase; part of the gene cluster that mediates the biosynthesis of gregatin A, a fungal polyketide featuring an alkylated furanone core (PubMed:32275405). The PKS grgA synthesizes C11 and C4 polyketide chains in the presence and absence of the trans-enoyl reductase grgB, respectively (PubMed:32275405). The polyketide transferase grgF is then responsible for the fusion of the two carbon chains to produce the furanone skeleton of gregatin A (PubMed:32275405). Next, the cytochrome P450 monooxygenase grgG accepts performs the oxidative cyclization to furnish the gregatin scaffold and leads to the formation of desmethylgregatin A (PubMed:32275405). Finally, the O-methyltransferase grgD methylates the carboxyl group of desmethylgregatin A to provide gregatin A (PubMed:32275405).</text>
</comment>
<comment type="pathway">
    <text evidence="3">Secondary metabolite biosynthesis.</text>
</comment>
<comment type="similarity">
    <text evidence="5">Belongs to the zinc-containing alcohol dehydrogenase family.</text>
</comment>
<feature type="chain" id="PRO_0000457342" description="Trans-enoyl reductase grgB">
    <location>
        <begin position="1"/>
        <end position="351"/>
    </location>
</feature>
<feature type="domain" description="Enoyl reductase (ER)" evidence="2">
    <location>
        <begin position="10"/>
        <end position="346"/>
    </location>
</feature>
<feature type="binding site" evidence="1">
    <location>
        <begin position="161"/>
        <end position="164"/>
    </location>
    <ligand>
        <name>NADP(+)</name>
        <dbReference type="ChEBI" id="CHEBI:58349"/>
    </ligand>
</feature>
<feature type="binding site" evidence="1">
    <location>
        <begin position="184"/>
        <end position="187"/>
    </location>
    <ligand>
        <name>NADP(+)</name>
        <dbReference type="ChEBI" id="CHEBI:58349"/>
    </ligand>
</feature>
<feature type="binding site" evidence="1">
    <location>
        <position position="202"/>
    </location>
    <ligand>
        <name>NADP(+)</name>
        <dbReference type="ChEBI" id="CHEBI:58349"/>
    </ligand>
</feature>
<feature type="binding site" evidence="1">
    <location>
        <begin position="249"/>
        <end position="250"/>
    </location>
    <ligand>
        <name>NADP(+)</name>
        <dbReference type="ChEBI" id="CHEBI:58349"/>
    </ligand>
</feature>
<feature type="binding site" evidence="1">
    <location>
        <begin position="339"/>
        <end position="340"/>
    </location>
    <ligand>
        <name>NADP(+)</name>
        <dbReference type="ChEBI" id="CHEBI:58349"/>
    </ligand>
</feature>
<keyword id="KW-0521">NADP</keyword>
<keyword id="KW-0547">Nucleotide-binding</keyword>
<keyword id="KW-0560">Oxidoreductase</keyword>
<organism>
    <name type="scientific">Penicillium sp</name>
    <dbReference type="NCBI Taxonomy" id="5081"/>
    <lineage>
        <taxon>Eukaryota</taxon>
        <taxon>Fungi</taxon>
        <taxon>Dikarya</taxon>
        <taxon>Ascomycota</taxon>
        <taxon>Pezizomycotina</taxon>
        <taxon>Eurotiomycetes</taxon>
        <taxon>Eurotiomycetidae</taxon>
        <taxon>Eurotiales</taxon>
        <taxon>Aspergillaceae</taxon>
        <taxon>Penicillium</taxon>
    </lineage>
</organism>
<protein>
    <recommendedName>
        <fullName evidence="4">Trans-enoyl reductase grgB</fullName>
        <ecNumber evidence="3">1.-.-.-</ecNumber>
    </recommendedName>
    <alternativeName>
        <fullName evidence="4">Gregatin A biosynthesis cluster protein B</fullName>
    </alternativeName>
</protein>
<gene>
    <name evidence="4" type="primary">grgB</name>
</gene>
<reference key="1">
    <citation type="journal article" date="2020" name="J. Am. Chem. Soc.">
        <title>Molecular basis for the biosynthesis of an unusual chain-fused polyketide gregatin A.</title>
        <authorList>
            <person name="Wang W.G."/>
            <person name="Wang H."/>
            <person name="Du L.Q."/>
            <person name="Li M."/>
            <person name="Chen L."/>
            <person name="Yu J."/>
            <person name="Cheng G.G."/>
            <person name="Zhan M.T."/>
            <person name="Hu Q.F."/>
            <person name="Zhang L."/>
            <person name="Yao M."/>
            <person name="Matsuda Y."/>
        </authorList>
    </citation>
    <scope>NUCLEOTIDE SEQUENCE [GENOMIC DNA]</scope>
    <scope>FUNCTION</scope>
    <scope>CATALYTIC ACTIVITY</scope>
    <scope>PATHWAY</scope>
    <source>
        <strain>Sh18</strain>
    </source>
</reference>
<accession>A0A6F8RQ72</accession>
<dbReference type="EC" id="1.-.-.-" evidence="3"/>
<dbReference type="EMBL" id="LC522971">
    <property type="protein sequence ID" value="BCA42569.1"/>
    <property type="molecule type" value="Genomic_DNA"/>
</dbReference>
<dbReference type="SMR" id="A0A6F8RQ72"/>
<dbReference type="GO" id="GO:0000166">
    <property type="term" value="F:nucleotide binding"/>
    <property type="evidence" value="ECO:0007669"/>
    <property type="project" value="UniProtKB-KW"/>
</dbReference>
<dbReference type="GO" id="GO:0016651">
    <property type="term" value="F:oxidoreductase activity, acting on NAD(P)H"/>
    <property type="evidence" value="ECO:0007669"/>
    <property type="project" value="InterPro"/>
</dbReference>
<dbReference type="CDD" id="cd08249">
    <property type="entry name" value="enoyl_reductase_like"/>
    <property type="match status" value="1"/>
</dbReference>
<dbReference type="Gene3D" id="3.90.180.10">
    <property type="entry name" value="Medium-chain alcohol dehydrogenases, catalytic domain"/>
    <property type="match status" value="1"/>
</dbReference>
<dbReference type="Gene3D" id="3.40.50.720">
    <property type="entry name" value="NAD(P)-binding Rossmann-like Domain"/>
    <property type="match status" value="1"/>
</dbReference>
<dbReference type="InterPro" id="IPR013149">
    <property type="entry name" value="ADH-like_C"/>
</dbReference>
<dbReference type="InterPro" id="IPR013154">
    <property type="entry name" value="ADH-like_N"/>
</dbReference>
<dbReference type="InterPro" id="IPR011032">
    <property type="entry name" value="GroES-like_sf"/>
</dbReference>
<dbReference type="InterPro" id="IPR036291">
    <property type="entry name" value="NAD(P)-bd_dom_sf"/>
</dbReference>
<dbReference type="InterPro" id="IPR020843">
    <property type="entry name" value="PKS_ER"/>
</dbReference>
<dbReference type="InterPro" id="IPR047122">
    <property type="entry name" value="Trans-enoyl_RdTase-like"/>
</dbReference>
<dbReference type="PANTHER" id="PTHR45348">
    <property type="entry name" value="HYPOTHETICAL OXIDOREDUCTASE (EUROFUNG)"/>
    <property type="match status" value="1"/>
</dbReference>
<dbReference type="PANTHER" id="PTHR45348:SF6">
    <property type="entry name" value="TRANS-ENOYL REDUCTASE APDC"/>
    <property type="match status" value="1"/>
</dbReference>
<dbReference type="Pfam" id="PF08240">
    <property type="entry name" value="ADH_N"/>
    <property type="match status" value="1"/>
</dbReference>
<dbReference type="Pfam" id="PF00107">
    <property type="entry name" value="ADH_zinc_N"/>
    <property type="match status" value="1"/>
</dbReference>
<dbReference type="SMART" id="SM00829">
    <property type="entry name" value="PKS_ER"/>
    <property type="match status" value="1"/>
</dbReference>
<dbReference type="SUPFAM" id="SSF50129">
    <property type="entry name" value="GroES-like"/>
    <property type="match status" value="1"/>
</dbReference>
<dbReference type="SUPFAM" id="SSF51735">
    <property type="entry name" value="NAD(P)-binding Rossmann-fold domains"/>
    <property type="match status" value="1"/>
</dbReference>
<sequence>MPTTMQALVGAESGGYRLAENVDIPVPQRGSILVQVHAVALNPRDAKIVDFSNAPGSLGGCDFAGTVKKVGEGVTRFKEGDRVLAVTFGSNALDKTKGAFAEFALAEEDISCRIPEDFSFTQACSIGLSMATAGLAIFQAPGLELSLHGGKGEAVLVSGGATATGTMATQLLRMAGYTPIVTCSPANNALCQSYGAAACFDYHSPACGADIRVQTNDSLRYVLDCVTDTTTMKMCYEAIGSSGGSYIALETIATTVKYTRRDVRADWFLADAIMGNGVQMAGTYGRAPSPELRRFGKQLFALAENWLHDGSIRHHPLEIQDGGLANMPQALNDMKLGKVHAKKLVVPILGH</sequence>